<protein>
    <recommendedName>
        <fullName>Xylose operon regulatory protein</fullName>
    </recommendedName>
</protein>
<proteinExistence type="inferred from homology"/>
<organism>
    <name type="scientific">Escherichia coli O6:H1 (strain CFT073 / ATCC 700928 / UPEC)</name>
    <dbReference type="NCBI Taxonomy" id="199310"/>
    <lineage>
        <taxon>Bacteria</taxon>
        <taxon>Pseudomonadati</taxon>
        <taxon>Pseudomonadota</taxon>
        <taxon>Gammaproteobacteria</taxon>
        <taxon>Enterobacterales</taxon>
        <taxon>Enterobacteriaceae</taxon>
        <taxon>Escherichia</taxon>
    </lineage>
</organism>
<comment type="function">
    <text evidence="1">Regulatory protein for the xylBAFGHR operon.</text>
</comment>
<gene>
    <name type="primary">xylR</name>
    <name type="ordered locus">c4389</name>
</gene>
<reference key="1">
    <citation type="journal article" date="2002" name="Proc. Natl. Acad. Sci. U.S.A.">
        <title>Extensive mosaic structure revealed by the complete genome sequence of uropathogenic Escherichia coli.</title>
        <authorList>
            <person name="Welch R.A."/>
            <person name="Burland V."/>
            <person name="Plunkett G. III"/>
            <person name="Redford P."/>
            <person name="Roesch P."/>
            <person name="Rasko D."/>
            <person name="Buckles E.L."/>
            <person name="Liou S.-R."/>
            <person name="Boutin A."/>
            <person name="Hackett J."/>
            <person name="Stroud D."/>
            <person name="Mayhew G.F."/>
            <person name="Rose D.J."/>
            <person name="Zhou S."/>
            <person name="Schwartz D.C."/>
            <person name="Perna N.T."/>
            <person name="Mobley H.L.T."/>
            <person name="Donnenberg M.S."/>
            <person name="Blattner F.R."/>
        </authorList>
    </citation>
    <scope>NUCLEOTIDE SEQUENCE [LARGE SCALE GENOMIC DNA]</scope>
    <source>
        <strain>CFT073 / ATCC 700928 / UPEC</strain>
    </source>
</reference>
<sequence>MFTKRHRITLLFNANKAYDRQVVEGVGEYLQASQSEWDIFIEEDFRARIDKIKDWLGDGVIADFDDKQIEQALADVDVPIVGVGGSYHLAESYPPVHYIATDNYALVESAFLHLKEKGVNRFAFYGLPESSGKRWATEREYAFRQLVAEEKYRGVVYQGLETAPENWQHAQNRLADWLQTLPPQTGIIAVTDARARHILQVCEHLHIPVPEKLCVIGIDNEELTRYLSRVALSSVAQGARQMGYQAAKLLHRLLDKEEMPLQRILVPPVRVIERRSTDYRSLTDPAVIQAMHYIRNHACKGIKVDQVLDAVGISRSNLEKRFKEEVGETIHAMIHAEKLEKARSLLISTTLSINEISQMCGYPSLQYFYSVFKKAYDTTPKEYRDVNSEVML</sequence>
<dbReference type="EMBL" id="AE014075">
    <property type="protein sequence ID" value="AAN82825.1"/>
    <property type="molecule type" value="Genomic_DNA"/>
</dbReference>
<dbReference type="RefSeq" id="WP_000494484.1">
    <property type="nucleotide sequence ID" value="NZ_CP051263.1"/>
</dbReference>
<dbReference type="SMR" id="P0ACI4"/>
<dbReference type="STRING" id="199310.c4389"/>
<dbReference type="GeneID" id="75203010"/>
<dbReference type="KEGG" id="ecc:c4389"/>
<dbReference type="eggNOG" id="COG1609">
    <property type="taxonomic scope" value="Bacteria"/>
</dbReference>
<dbReference type="eggNOG" id="COG2207">
    <property type="taxonomic scope" value="Bacteria"/>
</dbReference>
<dbReference type="HOGENOM" id="CLU_042405_1_0_6"/>
<dbReference type="BioCyc" id="ECOL199310:C4389-MONOMER"/>
<dbReference type="Proteomes" id="UP000001410">
    <property type="component" value="Chromosome"/>
</dbReference>
<dbReference type="GO" id="GO:0003700">
    <property type="term" value="F:DNA-binding transcription factor activity"/>
    <property type="evidence" value="ECO:0007669"/>
    <property type="project" value="InterPro"/>
</dbReference>
<dbReference type="GO" id="GO:0000976">
    <property type="term" value="F:transcription cis-regulatory region binding"/>
    <property type="evidence" value="ECO:0007669"/>
    <property type="project" value="TreeGrafter"/>
</dbReference>
<dbReference type="CDD" id="cd01543">
    <property type="entry name" value="PBP1_XylR"/>
    <property type="match status" value="1"/>
</dbReference>
<dbReference type="FunFam" id="1.10.10.60:FF:000136">
    <property type="entry name" value="Transcriptional regulator, AraC family"/>
    <property type="match status" value="1"/>
</dbReference>
<dbReference type="Gene3D" id="3.40.50.2300">
    <property type="match status" value="2"/>
</dbReference>
<dbReference type="Gene3D" id="1.10.10.60">
    <property type="entry name" value="Homeodomain-like"/>
    <property type="match status" value="1"/>
</dbReference>
<dbReference type="InterPro" id="IPR009057">
    <property type="entry name" value="Homeodomain-like_sf"/>
</dbReference>
<dbReference type="InterPro" id="IPR018060">
    <property type="entry name" value="HTH_AraC"/>
</dbReference>
<dbReference type="InterPro" id="IPR018062">
    <property type="entry name" value="HTH_AraC-typ_CS"/>
</dbReference>
<dbReference type="InterPro" id="IPR046335">
    <property type="entry name" value="LacI/GalR-like_sensor"/>
</dbReference>
<dbReference type="InterPro" id="IPR028082">
    <property type="entry name" value="Peripla_BP_I"/>
</dbReference>
<dbReference type="InterPro" id="IPR020449">
    <property type="entry name" value="Tscrpt_reg_AraC-type_HTH"/>
</dbReference>
<dbReference type="InterPro" id="IPR054031">
    <property type="entry name" value="XylR_PBP1"/>
</dbReference>
<dbReference type="PANTHER" id="PTHR30146">
    <property type="entry name" value="LACI-RELATED TRANSCRIPTIONAL REPRESSOR"/>
    <property type="match status" value="1"/>
</dbReference>
<dbReference type="PANTHER" id="PTHR30146:SF24">
    <property type="entry name" value="XYLOSE OPERON REGULATORY PROTEIN"/>
    <property type="match status" value="1"/>
</dbReference>
<dbReference type="Pfam" id="PF12833">
    <property type="entry name" value="HTH_18"/>
    <property type="match status" value="1"/>
</dbReference>
<dbReference type="Pfam" id="PF22177">
    <property type="entry name" value="PBP1_XylR"/>
    <property type="match status" value="1"/>
</dbReference>
<dbReference type="Pfam" id="PF13377">
    <property type="entry name" value="Peripla_BP_3"/>
    <property type="match status" value="1"/>
</dbReference>
<dbReference type="PRINTS" id="PR00032">
    <property type="entry name" value="HTHARAC"/>
</dbReference>
<dbReference type="SMART" id="SM00342">
    <property type="entry name" value="HTH_ARAC"/>
    <property type="match status" value="1"/>
</dbReference>
<dbReference type="SUPFAM" id="SSF46689">
    <property type="entry name" value="Homeodomain-like"/>
    <property type="match status" value="2"/>
</dbReference>
<dbReference type="SUPFAM" id="SSF53822">
    <property type="entry name" value="Periplasmic binding protein-like I"/>
    <property type="match status" value="1"/>
</dbReference>
<dbReference type="PROSITE" id="PS00041">
    <property type="entry name" value="HTH_ARAC_FAMILY_1"/>
    <property type="match status" value="1"/>
</dbReference>
<dbReference type="PROSITE" id="PS01124">
    <property type="entry name" value="HTH_ARAC_FAMILY_2"/>
    <property type="match status" value="1"/>
</dbReference>
<evidence type="ECO:0000250" key="1"/>
<evidence type="ECO:0000255" key="2">
    <source>
        <dbReference type="PROSITE-ProRule" id="PRU00593"/>
    </source>
</evidence>
<accession>P0ACI4</accession>
<accession>P37390</accession>
<feature type="chain" id="PRO_0000194599" description="Xylose operon regulatory protein">
    <location>
        <begin position="1"/>
        <end position="392"/>
    </location>
</feature>
<feature type="domain" description="HTH araC/xylS-type" evidence="2">
    <location>
        <begin position="288"/>
        <end position="386"/>
    </location>
</feature>
<feature type="DNA-binding region" description="H-T-H motif" evidence="2">
    <location>
        <begin position="305"/>
        <end position="326"/>
    </location>
</feature>
<feature type="DNA-binding region" description="H-T-H motif" evidence="2">
    <location>
        <begin position="353"/>
        <end position="376"/>
    </location>
</feature>
<name>XYLR_ECOL6</name>
<keyword id="KW-0238">DNA-binding</keyword>
<keyword id="KW-1185">Reference proteome</keyword>
<keyword id="KW-0804">Transcription</keyword>
<keyword id="KW-0805">Transcription regulation</keyword>